<protein>
    <recommendedName>
        <fullName>Outer membrane protein P.III</fullName>
    </recommendedName>
    <alternativeName>
        <fullName>Gonococcal protein III</fullName>
        <shortName>PIII</shortName>
    </alternativeName>
</protein>
<dbReference type="EMBL" id="X05105">
    <property type="protein sequence ID" value="CAA28752.1"/>
    <property type="molecule type" value="Genomic_DNA"/>
</dbReference>
<dbReference type="PIR" id="A27894">
    <property type="entry name" value="A27894"/>
</dbReference>
<dbReference type="RefSeq" id="WP_003689500.1">
    <property type="nucleotide sequence ID" value="NZ_WHPL01000002.1"/>
</dbReference>
<dbReference type="SMR" id="P07050"/>
<dbReference type="GeneID" id="66753782"/>
<dbReference type="OMA" id="CWRTGYW"/>
<dbReference type="GO" id="GO:0009279">
    <property type="term" value="C:cell outer membrane"/>
    <property type="evidence" value="ECO:0007669"/>
    <property type="project" value="UniProtKB-SubCell"/>
</dbReference>
<dbReference type="GO" id="GO:0046930">
    <property type="term" value="C:pore complex"/>
    <property type="evidence" value="ECO:0007669"/>
    <property type="project" value="UniProtKB-KW"/>
</dbReference>
<dbReference type="GO" id="GO:0015288">
    <property type="term" value="F:porin activity"/>
    <property type="evidence" value="ECO:0007669"/>
    <property type="project" value="UniProtKB-KW"/>
</dbReference>
<dbReference type="GO" id="GO:0006811">
    <property type="term" value="P:monoatomic ion transport"/>
    <property type="evidence" value="ECO:0007669"/>
    <property type="project" value="UniProtKB-KW"/>
</dbReference>
<dbReference type="CDD" id="cd07185">
    <property type="entry name" value="OmpA_C-like"/>
    <property type="match status" value="1"/>
</dbReference>
<dbReference type="FunFam" id="3.30.1330.60:FF:000010">
    <property type="entry name" value="Outer membrane protein class 4"/>
    <property type="match status" value="1"/>
</dbReference>
<dbReference type="Gene3D" id="3.30.1330.60">
    <property type="entry name" value="OmpA-like domain"/>
    <property type="match status" value="1"/>
</dbReference>
<dbReference type="InterPro" id="IPR050330">
    <property type="entry name" value="Bact_OuterMem_StrucFunc"/>
</dbReference>
<dbReference type="InterPro" id="IPR006664">
    <property type="entry name" value="OMP_bac"/>
</dbReference>
<dbReference type="InterPro" id="IPR006665">
    <property type="entry name" value="OmpA-like"/>
</dbReference>
<dbReference type="InterPro" id="IPR006690">
    <property type="entry name" value="OMPA-like_CS"/>
</dbReference>
<dbReference type="InterPro" id="IPR036737">
    <property type="entry name" value="OmpA-like_sf"/>
</dbReference>
<dbReference type="PANTHER" id="PTHR30329:SF21">
    <property type="entry name" value="LIPOPROTEIN YIAD-RELATED"/>
    <property type="match status" value="1"/>
</dbReference>
<dbReference type="PANTHER" id="PTHR30329">
    <property type="entry name" value="STATOR ELEMENT OF FLAGELLAR MOTOR COMPLEX"/>
    <property type="match status" value="1"/>
</dbReference>
<dbReference type="Pfam" id="PF00691">
    <property type="entry name" value="OmpA"/>
    <property type="match status" value="1"/>
</dbReference>
<dbReference type="PRINTS" id="PR01021">
    <property type="entry name" value="OMPADOMAIN"/>
</dbReference>
<dbReference type="SUPFAM" id="SSF103088">
    <property type="entry name" value="OmpA-like"/>
    <property type="match status" value="1"/>
</dbReference>
<dbReference type="PROSITE" id="PS01068">
    <property type="entry name" value="OMPA_1"/>
    <property type="match status" value="1"/>
</dbReference>
<dbReference type="PROSITE" id="PS51123">
    <property type="entry name" value="OMPA_2"/>
    <property type="match status" value="1"/>
</dbReference>
<feature type="signal peptide" evidence="2">
    <location>
        <begin position="1"/>
        <end position="22"/>
    </location>
</feature>
<feature type="chain" id="PRO_0000020110" description="Outer membrane protein P.III">
    <location>
        <begin position="23"/>
        <end position="236"/>
    </location>
</feature>
<feature type="repeat" description="1">
    <location>
        <begin position="69"/>
        <end position="70"/>
    </location>
</feature>
<feature type="repeat" description="2">
    <location>
        <begin position="71"/>
        <end position="72"/>
    </location>
</feature>
<feature type="repeat" description="3">
    <location>
        <begin position="73"/>
        <end position="74"/>
    </location>
</feature>
<feature type="repeat" description="4">
    <location>
        <begin position="75"/>
        <end position="76"/>
    </location>
</feature>
<feature type="domain" description="OmpA-like" evidence="3">
    <location>
        <begin position="86"/>
        <end position="223"/>
    </location>
</feature>
<feature type="region of interest" description="4 X 2 AA tandem repeats of X-P">
    <location>
        <begin position="69"/>
        <end position="76"/>
    </location>
</feature>
<feature type="disulfide bond" evidence="1">
    <location>
        <begin position="185"/>
        <end position="208"/>
    </location>
</feature>
<evidence type="ECO:0000250" key="1"/>
<evidence type="ECO:0000255" key="2"/>
<evidence type="ECO:0000255" key="3">
    <source>
        <dbReference type="PROSITE-ProRule" id="PRU00473"/>
    </source>
</evidence>
<evidence type="ECO:0000305" key="4"/>
<comment type="subcellular location">
    <subcellularLocation>
        <location>Cell outer membrane</location>
        <topology>Multi-pass membrane protein</topology>
    </subcellularLocation>
</comment>
<comment type="miscellaneous">
    <text>PIII is closely associated with part, but not all of the PI molecules in the gonococcal outer membrane.</text>
</comment>
<comment type="miscellaneous">
    <text>A portion of the PIII is exposed to the surface in intact gonococci; the protein can be labeled with iodine and reacts with MABs.</text>
</comment>
<comment type="similarity">
    <text evidence="4">Belongs to the outer membrane OOP (TC 1.B.6) superfamily.</text>
</comment>
<reference key="1">
    <citation type="journal article" date="1987" name="J. Exp. Med.">
        <title>The DNA sequence of the structural gene of gonococcal protein III and the flanking region containing a repetitive sequence. Homology of protein III with enterobacterial OmpA proteins.</title>
        <authorList>
            <person name="Gotschlich E.C."/>
            <person name="Seiff M."/>
            <person name="Blake M.S."/>
        </authorList>
    </citation>
    <scope>NUCLEOTIDE SEQUENCE [GENOMIC DNA]</scope>
</reference>
<proteinExistence type="inferred from homology"/>
<keyword id="KW-0998">Cell outer membrane</keyword>
<keyword id="KW-1015">Disulfide bond</keyword>
<keyword id="KW-0406">Ion transport</keyword>
<keyword id="KW-0472">Membrane</keyword>
<keyword id="KW-0626">Porin</keyword>
<keyword id="KW-0677">Repeat</keyword>
<keyword id="KW-0732">Signal</keyword>
<keyword id="KW-0812">Transmembrane</keyword>
<keyword id="KW-1134">Transmembrane beta strand</keyword>
<keyword id="KW-0813">Transport</keyword>
<name>OMP3_NEIGO</name>
<sequence>MTKQLKLSALFVALLASGTAVAGEASVQGYTVSGQSNEIVRNNYGECWKNAYFDKASQGRVECGDAVAVPEPEPAPVAVVEQAPQYVDETISLSAKTLFGFDKDSLRAEAQDNLKVLAQRLSRTNVQSVRVEGHTDFMGSEKYNQALSERRAYVVANNLVSNGVPASRISAVGLGESQAQMTQVCQAEVAKLGAKASKAKKREALIACIEPDRRVDVKIRSIVTRQVVPARNHHQH</sequence>
<organism>
    <name type="scientific">Neisseria gonorrhoeae</name>
    <dbReference type="NCBI Taxonomy" id="485"/>
    <lineage>
        <taxon>Bacteria</taxon>
        <taxon>Pseudomonadati</taxon>
        <taxon>Pseudomonadota</taxon>
        <taxon>Betaproteobacteria</taxon>
        <taxon>Neisseriales</taxon>
        <taxon>Neisseriaceae</taxon>
        <taxon>Neisseria</taxon>
    </lineage>
</organism>
<accession>P07050</accession>